<keyword id="KW-1185">Reference proteome</keyword>
<keyword id="KW-0687">Ribonucleoprotein</keyword>
<keyword id="KW-0689">Ribosomal protein</keyword>
<evidence type="ECO:0000255" key="1">
    <source>
        <dbReference type="HAMAP-Rule" id="MF_00368"/>
    </source>
</evidence>
<evidence type="ECO:0000305" key="2"/>
<organism>
    <name type="scientific">Wigglesworthia glossinidia brevipalpis</name>
    <dbReference type="NCBI Taxonomy" id="36870"/>
    <lineage>
        <taxon>Bacteria</taxon>
        <taxon>Pseudomonadati</taxon>
        <taxon>Pseudomonadota</taxon>
        <taxon>Gammaproteobacteria</taxon>
        <taxon>Enterobacterales</taxon>
        <taxon>Erwiniaceae</taxon>
        <taxon>Wigglesworthia</taxon>
    </lineage>
</organism>
<proteinExistence type="inferred from homology"/>
<reference key="1">
    <citation type="journal article" date="2002" name="Nat. Genet.">
        <title>Genome sequence of the endocellular obligate symbiont of tsetse flies, Wigglesworthia glossinidia.</title>
        <authorList>
            <person name="Akman L."/>
            <person name="Yamashita A."/>
            <person name="Watanabe H."/>
            <person name="Oshima K."/>
            <person name="Shiba T."/>
            <person name="Hattori M."/>
            <person name="Aksoy S."/>
        </authorList>
    </citation>
    <scope>NUCLEOTIDE SEQUENCE [LARGE SCALE GENOMIC DNA]</scope>
</reference>
<sequence length="123" mass="13622">MSINKQQILDAVSEMSVLEISELVSMMEKKFGVSSINNNNINVNKVDESVEEKSEFDVLLLEIGKNKISVIKSVRSALSLGLKESKDLIESELPITLKTGLNKKDAESLKKEIETSGARIELK</sequence>
<comment type="function">
    <text evidence="1">Forms part of the ribosomal stalk which helps the ribosome interact with GTP-bound translation factors. Is thus essential for accurate translation.</text>
</comment>
<comment type="subunit">
    <text evidence="1">Homodimer. Part of the ribosomal stalk of the 50S ribosomal subunit. Forms a multimeric L10(L12)X complex, where L10 forms an elongated spine to which 2 to 4 L12 dimers bind in a sequential fashion. Binds GTP-bound translation factors.</text>
</comment>
<comment type="similarity">
    <text evidence="1">Belongs to the bacterial ribosomal protein bL12 family.</text>
</comment>
<gene>
    <name evidence="1" type="primary">rplL</name>
    <name type="ordered locus">WIGBR5210</name>
</gene>
<feature type="chain" id="PRO_0000157606" description="Large ribosomal subunit protein bL12">
    <location>
        <begin position="1"/>
        <end position="123"/>
    </location>
</feature>
<name>RL7_WIGBR</name>
<protein>
    <recommendedName>
        <fullName evidence="1">Large ribosomal subunit protein bL12</fullName>
    </recommendedName>
    <alternativeName>
        <fullName evidence="2">50S ribosomal protein L7/L12</fullName>
    </alternativeName>
</protein>
<accession>Q8D234</accession>
<dbReference type="EMBL" id="BA000021">
    <property type="protein sequence ID" value="BAC24667.1"/>
    <property type="molecule type" value="Genomic_DNA"/>
</dbReference>
<dbReference type="SMR" id="Q8D234"/>
<dbReference type="STRING" id="36870.gene:10369029"/>
<dbReference type="KEGG" id="wbr:rplL"/>
<dbReference type="eggNOG" id="COG0222">
    <property type="taxonomic scope" value="Bacteria"/>
</dbReference>
<dbReference type="HOGENOM" id="CLU_086499_3_2_6"/>
<dbReference type="OrthoDB" id="9811748at2"/>
<dbReference type="Proteomes" id="UP000000562">
    <property type="component" value="Chromosome"/>
</dbReference>
<dbReference type="GO" id="GO:0022625">
    <property type="term" value="C:cytosolic large ribosomal subunit"/>
    <property type="evidence" value="ECO:0007669"/>
    <property type="project" value="TreeGrafter"/>
</dbReference>
<dbReference type="GO" id="GO:0003729">
    <property type="term" value="F:mRNA binding"/>
    <property type="evidence" value="ECO:0007669"/>
    <property type="project" value="TreeGrafter"/>
</dbReference>
<dbReference type="GO" id="GO:0003735">
    <property type="term" value="F:structural constituent of ribosome"/>
    <property type="evidence" value="ECO:0007669"/>
    <property type="project" value="InterPro"/>
</dbReference>
<dbReference type="GO" id="GO:0006412">
    <property type="term" value="P:translation"/>
    <property type="evidence" value="ECO:0007669"/>
    <property type="project" value="UniProtKB-UniRule"/>
</dbReference>
<dbReference type="CDD" id="cd00387">
    <property type="entry name" value="Ribosomal_L7_L12"/>
    <property type="match status" value="1"/>
</dbReference>
<dbReference type="FunFam" id="3.30.1390.10:FF:000001">
    <property type="entry name" value="50S ribosomal protein L7/L12"/>
    <property type="match status" value="1"/>
</dbReference>
<dbReference type="Gene3D" id="3.30.1390.10">
    <property type="match status" value="1"/>
</dbReference>
<dbReference type="Gene3D" id="1.20.5.710">
    <property type="entry name" value="Single helix bin"/>
    <property type="match status" value="1"/>
</dbReference>
<dbReference type="HAMAP" id="MF_00368">
    <property type="entry name" value="Ribosomal_bL12"/>
    <property type="match status" value="1"/>
</dbReference>
<dbReference type="InterPro" id="IPR000206">
    <property type="entry name" value="Ribosomal_bL12"/>
</dbReference>
<dbReference type="InterPro" id="IPR013823">
    <property type="entry name" value="Ribosomal_bL12_C"/>
</dbReference>
<dbReference type="InterPro" id="IPR014719">
    <property type="entry name" value="Ribosomal_bL12_C/ClpS-like"/>
</dbReference>
<dbReference type="InterPro" id="IPR008932">
    <property type="entry name" value="Ribosomal_bL12_oligo"/>
</dbReference>
<dbReference type="InterPro" id="IPR036235">
    <property type="entry name" value="Ribosomal_bL12_oligo_N_sf"/>
</dbReference>
<dbReference type="NCBIfam" id="TIGR00855">
    <property type="entry name" value="L12"/>
    <property type="match status" value="1"/>
</dbReference>
<dbReference type="PANTHER" id="PTHR45987">
    <property type="entry name" value="39S RIBOSOMAL PROTEIN L12"/>
    <property type="match status" value="1"/>
</dbReference>
<dbReference type="PANTHER" id="PTHR45987:SF4">
    <property type="entry name" value="LARGE RIBOSOMAL SUBUNIT PROTEIN BL12M"/>
    <property type="match status" value="1"/>
</dbReference>
<dbReference type="Pfam" id="PF00542">
    <property type="entry name" value="Ribosomal_L12"/>
    <property type="match status" value="1"/>
</dbReference>
<dbReference type="Pfam" id="PF16320">
    <property type="entry name" value="Ribosomal_L12_N"/>
    <property type="match status" value="1"/>
</dbReference>
<dbReference type="SUPFAM" id="SSF54736">
    <property type="entry name" value="ClpS-like"/>
    <property type="match status" value="1"/>
</dbReference>
<dbReference type="SUPFAM" id="SSF48300">
    <property type="entry name" value="Ribosomal protein L7/12, oligomerisation (N-terminal) domain"/>
    <property type="match status" value="1"/>
</dbReference>